<organism>
    <name type="scientific">Rhodopseudomonas palustris (strain BisB18)</name>
    <dbReference type="NCBI Taxonomy" id="316056"/>
    <lineage>
        <taxon>Bacteria</taxon>
        <taxon>Pseudomonadati</taxon>
        <taxon>Pseudomonadota</taxon>
        <taxon>Alphaproteobacteria</taxon>
        <taxon>Hyphomicrobiales</taxon>
        <taxon>Nitrobacteraceae</taxon>
        <taxon>Rhodopseudomonas</taxon>
    </lineage>
</organism>
<sequence>MALFPDLVPELKAAMPQLRGRLLGNEPLAPLTWFRVGGPAQVLFTPADADDLGYFLAALPRDIDVTVVGVGSNLIVRDGGLPGVVIRLGGRGFGETGTDGDVVSAGSAALDKRVAEAAAAAGLGGLEFYHGIPGTIGGALRMNAGANGRETKDVLIDASAIARDGTLHRLSNAEMGFSYRHSGADPALIFTSARFRGEPMDRAAIRARMDEVQRHRETAQPVREKTGGSTFKNPPGHSAWKLIDAAGCRGLRVGGAQVSEMHCNFLINTGSATAQDIETLGDTVRARVKEHCGIELQWEIKRIGRALD</sequence>
<dbReference type="EC" id="1.3.1.98" evidence="1"/>
<dbReference type="EMBL" id="CP000301">
    <property type="protein sequence ID" value="ABD88846.1"/>
    <property type="molecule type" value="Genomic_DNA"/>
</dbReference>
<dbReference type="SMR" id="Q211U0"/>
<dbReference type="STRING" id="316056.RPC_3304"/>
<dbReference type="KEGG" id="rpc:RPC_3304"/>
<dbReference type="eggNOG" id="COG0812">
    <property type="taxonomic scope" value="Bacteria"/>
</dbReference>
<dbReference type="HOGENOM" id="CLU_035304_1_0_5"/>
<dbReference type="UniPathway" id="UPA00219"/>
<dbReference type="GO" id="GO:0005829">
    <property type="term" value="C:cytosol"/>
    <property type="evidence" value="ECO:0007669"/>
    <property type="project" value="TreeGrafter"/>
</dbReference>
<dbReference type="GO" id="GO:0071949">
    <property type="term" value="F:FAD binding"/>
    <property type="evidence" value="ECO:0007669"/>
    <property type="project" value="InterPro"/>
</dbReference>
<dbReference type="GO" id="GO:0008762">
    <property type="term" value="F:UDP-N-acetylmuramate dehydrogenase activity"/>
    <property type="evidence" value="ECO:0007669"/>
    <property type="project" value="UniProtKB-UniRule"/>
</dbReference>
<dbReference type="GO" id="GO:0051301">
    <property type="term" value="P:cell division"/>
    <property type="evidence" value="ECO:0007669"/>
    <property type="project" value="UniProtKB-KW"/>
</dbReference>
<dbReference type="GO" id="GO:0071555">
    <property type="term" value="P:cell wall organization"/>
    <property type="evidence" value="ECO:0007669"/>
    <property type="project" value="UniProtKB-KW"/>
</dbReference>
<dbReference type="GO" id="GO:0009252">
    <property type="term" value="P:peptidoglycan biosynthetic process"/>
    <property type="evidence" value="ECO:0007669"/>
    <property type="project" value="UniProtKB-UniRule"/>
</dbReference>
<dbReference type="GO" id="GO:0008360">
    <property type="term" value="P:regulation of cell shape"/>
    <property type="evidence" value="ECO:0007669"/>
    <property type="project" value="UniProtKB-KW"/>
</dbReference>
<dbReference type="Gene3D" id="3.30.465.10">
    <property type="match status" value="1"/>
</dbReference>
<dbReference type="Gene3D" id="3.90.78.10">
    <property type="entry name" value="UDP-N-acetylenolpyruvoylglucosamine reductase, C-terminal domain"/>
    <property type="match status" value="1"/>
</dbReference>
<dbReference type="Gene3D" id="3.30.43.10">
    <property type="entry name" value="Uridine Diphospho-n-acetylenolpyruvylglucosamine Reductase, domain 2"/>
    <property type="match status" value="1"/>
</dbReference>
<dbReference type="HAMAP" id="MF_00037">
    <property type="entry name" value="MurB"/>
    <property type="match status" value="1"/>
</dbReference>
<dbReference type="InterPro" id="IPR016166">
    <property type="entry name" value="FAD-bd_PCMH"/>
</dbReference>
<dbReference type="InterPro" id="IPR036318">
    <property type="entry name" value="FAD-bd_PCMH-like_sf"/>
</dbReference>
<dbReference type="InterPro" id="IPR016167">
    <property type="entry name" value="FAD-bd_PCMH_sub1"/>
</dbReference>
<dbReference type="InterPro" id="IPR016169">
    <property type="entry name" value="FAD-bd_PCMH_sub2"/>
</dbReference>
<dbReference type="InterPro" id="IPR003170">
    <property type="entry name" value="MurB"/>
</dbReference>
<dbReference type="InterPro" id="IPR011601">
    <property type="entry name" value="MurB_C"/>
</dbReference>
<dbReference type="InterPro" id="IPR036635">
    <property type="entry name" value="MurB_C_sf"/>
</dbReference>
<dbReference type="InterPro" id="IPR006094">
    <property type="entry name" value="Oxid_FAD_bind_N"/>
</dbReference>
<dbReference type="NCBIfam" id="TIGR00179">
    <property type="entry name" value="murB"/>
    <property type="match status" value="1"/>
</dbReference>
<dbReference type="NCBIfam" id="NF010480">
    <property type="entry name" value="PRK13905.1"/>
    <property type="match status" value="1"/>
</dbReference>
<dbReference type="PANTHER" id="PTHR21071">
    <property type="entry name" value="UDP-N-ACETYLENOLPYRUVOYLGLUCOSAMINE REDUCTASE"/>
    <property type="match status" value="1"/>
</dbReference>
<dbReference type="PANTHER" id="PTHR21071:SF4">
    <property type="entry name" value="UDP-N-ACETYLENOLPYRUVOYLGLUCOSAMINE REDUCTASE"/>
    <property type="match status" value="1"/>
</dbReference>
<dbReference type="Pfam" id="PF01565">
    <property type="entry name" value="FAD_binding_4"/>
    <property type="match status" value="1"/>
</dbReference>
<dbReference type="Pfam" id="PF02873">
    <property type="entry name" value="MurB_C"/>
    <property type="match status" value="1"/>
</dbReference>
<dbReference type="SUPFAM" id="SSF56176">
    <property type="entry name" value="FAD-binding/transporter-associated domain-like"/>
    <property type="match status" value="1"/>
</dbReference>
<dbReference type="SUPFAM" id="SSF56194">
    <property type="entry name" value="Uridine diphospho-N-Acetylenolpyruvylglucosamine reductase, MurB, C-terminal domain"/>
    <property type="match status" value="1"/>
</dbReference>
<dbReference type="PROSITE" id="PS51387">
    <property type="entry name" value="FAD_PCMH"/>
    <property type="match status" value="1"/>
</dbReference>
<keyword id="KW-0131">Cell cycle</keyword>
<keyword id="KW-0132">Cell division</keyword>
<keyword id="KW-0133">Cell shape</keyword>
<keyword id="KW-0961">Cell wall biogenesis/degradation</keyword>
<keyword id="KW-0963">Cytoplasm</keyword>
<keyword id="KW-0274">FAD</keyword>
<keyword id="KW-0285">Flavoprotein</keyword>
<keyword id="KW-0521">NADP</keyword>
<keyword id="KW-0560">Oxidoreductase</keyword>
<keyword id="KW-0573">Peptidoglycan synthesis</keyword>
<accession>Q211U0</accession>
<comment type="function">
    <text evidence="1">Cell wall formation.</text>
</comment>
<comment type="catalytic activity">
    <reaction evidence="1">
        <text>UDP-N-acetyl-alpha-D-muramate + NADP(+) = UDP-N-acetyl-3-O-(1-carboxyvinyl)-alpha-D-glucosamine + NADPH + H(+)</text>
        <dbReference type="Rhea" id="RHEA:12248"/>
        <dbReference type="ChEBI" id="CHEBI:15378"/>
        <dbReference type="ChEBI" id="CHEBI:57783"/>
        <dbReference type="ChEBI" id="CHEBI:58349"/>
        <dbReference type="ChEBI" id="CHEBI:68483"/>
        <dbReference type="ChEBI" id="CHEBI:70757"/>
        <dbReference type="EC" id="1.3.1.98"/>
    </reaction>
</comment>
<comment type="cofactor">
    <cofactor evidence="1">
        <name>FAD</name>
        <dbReference type="ChEBI" id="CHEBI:57692"/>
    </cofactor>
</comment>
<comment type="pathway">
    <text evidence="1">Cell wall biogenesis; peptidoglycan biosynthesis.</text>
</comment>
<comment type="subcellular location">
    <subcellularLocation>
        <location evidence="1">Cytoplasm</location>
    </subcellularLocation>
</comment>
<comment type="similarity">
    <text evidence="1">Belongs to the MurB family.</text>
</comment>
<reference key="1">
    <citation type="submission" date="2006-03" db="EMBL/GenBank/DDBJ databases">
        <title>Complete sequence of Rhodopseudomonas palustris BisB18.</title>
        <authorList>
            <consortium name="US DOE Joint Genome Institute"/>
            <person name="Copeland A."/>
            <person name="Lucas S."/>
            <person name="Lapidus A."/>
            <person name="Barry K."/>
            <person name="Detter J.C."/>
            <person name="Glavina del Rio T."/>
            <person name="Hammon N."/>
            <person name="Israni S."/>
            <person name="Dalin E."/>
            <person name="Tice H."/>
            <person name="Pitluck S."/>
            <person name="Chain P."/>
            <person name="Malfatti S."/>
            <person name="Shin M."/>
            <person name="Vergez L."/>
            <person name="Schmutz J."/>
            <person name="Larimer F."/>
            <person name="Land M."/>
            <person name="Hauser L."/>
            <person name="Pelletier D.A."/>
            <person name="Kyrpides N."/>
            <person name="Anderson I."/>
            <person name="Oda Y."/>
            <person name="Harwood C.S."/>
            <person name="Richardson P."/>
        </authorList>
    </citation>
    <scope>NUCLEOTIDE SEQUENCE [LARGE SCALE GENOMIC DNA]</scope>
    <source>
        <strain>BisB18</strain>
    </source>
</reference>
<gene>
    <name evidence="1" type="primary">murB</name>
    <name type="ordered locus">RPC_3304</name>
</gene>
<proteinExistence type="inferred from homology"/>
<protein>
    <recommendedName>
        <fullName evidence="1">UDP-N-acetylenolpyruvoylglucosamine reductase</fullName>
        <ecNumber evidence="1">1.3.1.98</ecNumber>
    </recommendedName>
    <alternativeName>
        <fullName evidence="1">UDP-N-acetylmuramate dehydrogenase</fullName>
    </alternativeName>
</protein>
<feature type="chain" id="PRO_0000332495" description="UDP-N-acetylenolpyruvoylglucosamine reductase">
    <location>
        <begin position="1"/>
        <end position="308"/>
    </location>
</feature>
<feature type="domain" description="FAD-binding PCMH-type" evidence="1">
    <location>
        <begin position="35"/>
        <end position="200"/>
    </location>
</feature>
<feature type="region of interest" description="Disordered" evidence="2">
    <location>
        <begin position="211"/>
        <end position="236"/>
    </location>
</feature>
<feature type="compositionally biased region" description="Basic and acidic residues" evidence="2">
    <location>
        <begin position="211"/>
        <end position="226"/>
    </location>
</feature>
<feature type="active site" evidence="1">
    <location>
        <position position="180"/>
    </location>
</feature>
<feature type="active site" description="Proton donor" evidence="1">
    <location>
        <position position="229"/>
    </location>
</feature>
<feature type="active site" evidence="1">
    <location>
        <position position="299"/>
    </location>
</feature>
<name>MURB_RHOPB</name>
<evidence type="ECO:0000255" key="1">
    <source>
        <dbReference type="HAMAP-Rule" id="MF_00037"/>
    </source>
</evidence>
<evidence type="ECO:0000256" key="2">
    <source>
        <dbReference type="SAM" id="MobiDB-lite"/>
    </source>
</evidence>